<reference key="1">
    <citation type="submission" date="2007-07" db="EMBL/GenBank/DDBJ databases">
        <title>Genome sequence of Campylobacter curvus 525.92 isolated from human feces.</title>
        <authorList>
            <person name="Fouts D.E."/>
            <person name="Mongodin E.F."/>
            <person name="Puiu D."/>
            <person name="Sebastian Y."/>
            <person name="Miller W.G."/>
            <person name="Mandrell R.E."/>
            <person name="Lastovica A.J."/>
            <person name="Nelson K.E."/>
        </authorList>
    </citation>
    <scope>NUCLEOTIDE SEQUENCE [LARGE SCALE GENOMIC DNA]</scope>
    <source>
        <strain>525.92</strain>
    </source>
</reference>
<sequence>MITLKEALKLSNEEIKDLRAQLEARIIKERELGAYVEQLTGLPLSKLGEGVPIAIKDNIQIKGWSVTSGSKILQGYIAPYNATAIEKLLARNLAAFGRTNMDEFAMGSTTESSFYGHTLNPLNHAHVPGGSSGGSAAAVAGGIAIAALGSDTGGSIRQPAAFCGCVGFKPTYGRVSRYGLAAYSSSLDQIGPIAQNVEDAAILYDIIAGHDEKDSTSADVAFSSVADKINGERKLNICVIENYVNNASEDTKKALNSAIDKLKNFGHKIVYKNLEDSKYDVAAYYIIATAEASANLSRYDGVRYGRRAEAKNLKELYVNSRSEGFGEEVKRRILLGTFVLSSGYYDAYYIKAQKARAHIKAQYEKILDEADLIFMPVSPTTAPKFGLMSDPLQAYLSDIYTISVNLAGLPAISVPIAKDGQNLNISAQLIAKAWDEQTLIDGAKSLENLIKG</sequence>
<keyword id="KW-0067">ATP-binding</keyword>
<keyword id="KW-0436">Ligase</keyword>
<keyword id="KW-0547">Nucleotide-binding</keyword>
<keyword id="KW-0648">Protein biosynthesis</keyword>
<keyword id="KW-1185">Reference proteome</keyword>
<dbReference type="EC" id="6.3.5.7" evidence="1"/>
<dbReference type="EMBL" id="CP000767">
    <property type="protein sequence ID" value="EAT99856.1"/>
    <property type="molecule type" value="Genomic_DNA"/>
</dbReference>
<dbReference type="RefSeq" id="WP_011991962.1">
    <property type="nucleotide sequence ID" value="NC_009715.2"/>
</dbReference>
<dbReference type="SMR" id="A7GX27"/>
<dbReference type="STRING" id="360105.CCV52592_0978"/>
<dbReference type="KEGG" id="ccv:CCV52592_0978"/>
<dbReference type="HOGENOM" id="CLU_009600_0_3_7"/>
<dbReference type="OrthoDB" id="9811471at2"/>
<dbReference type="Proteomes" id="UP000006380">
    <property type="component" value="Chromosome"/>
</dbReference>
<dbReference type="GO" id="GO:0030956">
    <property type="term" value="C:glutamyl-tRNA(Gln) amidotransferase complex"/>
    <property type="evidence" value="ECO:0007669"/>
    <property type="project" value="InterPro"/>
</dbReference>
<dbReference type="GO" id="GO:0005524">
    <property type="term" value="F:ATP binding"/>
    <property type="evidence" value="ECO:0007669"/>
    <property type="project" value="UniProtKB-KW"/>
</dbReference>
<dbReference type="GO" id="GO:0050567">
    <property type="term" value="F:glutaminyl-tRNA synthase (glutamine-hydrolyzing) activity"/>
    <property type="evidence" value="ECO:0007669"/>
    <property type="project" value="UniProtKB-UniRule"/>
</dbReference>
<dbReference type="GO" id="GO:0006412">
    <property type="term" value="P:translation"/>
    <property type="evidence" value="ECO:0007669"/>
    <property type="project" value="UniProtKB-UniRule"/>
</dbReference>
<dbReference type="Gene3D" id="3.90.1300.10">
    <property type="entry name" value="Amidase signature (AS) domain"/>
    <property type="match status" value="1"/>
</dbReference>
<dbReference type="HAMAP" id="MF_00120">
    <property type="entry name" value="GatA"/>
    <property type="match status" value="1"/>
</dbReference>
<dbReference type="InterPro" id="IPR000120">
    <property type="entry name" value="Amidase"/>
</dbReference>
<dbReference type="InterPro" id="IPR020556">
    <property type="entry name" value="Amidase_CS"/>
</dbReference>
<dbReference type="InterPro" id="IPR023631">
    <property type="entry name" value="Amidase_dom"/>
</dbReference>
<dbReference type="InterPro" id="IPR036928">
    <property type="entry name" value="AS_sf"/>
</dbReference>
<dbReference type="InterPro" id="IPR004412">
    <property type="entry name" value="GatA"/>
</dbReference>
<dbReference type="NCBIfam" id="TIGR00132">
    <property type="entry name" value="gatA"/>
    <property type="match status" value="1"/>
</dbReference>
<dbReference type="PANTHER" id="PTHR11895:SF151">
    <property type="entry name" value="GLUTAMYL-TRNA(GLN) AMIDOTRANSFERASE SUBUNIT A"/>
    <property type="match status" value="1"/>
</dbReference>
<dbReference type="PANTHER" id="PTHR11895">
    <property type="entry name" value="TRANSAMIDASE"/>
    <property type="match status" value="1"/>
</dbReference>
<dbReference type="Pfam" id="PF01425">
    <property type="entry name" value="Amidase"/>
    <property type="match status" value="1"/>
</dbReference>
<dbReference type="SUPFAM" id="SSF75304">
    <property type="entry name" value="Amidase signature (AS) enzymes"/>
    <property type="match status" value="1"/>
</dbReference>
<dbReference type="PROSITE" id="PS00571">
    <property type="entry name" value="AMIDASES"/>
    <property type="match status" value="1"/>
</dbReference>
<accession>A7GX27</accession>
<name>GATA_CAMC5</name>
<feature type="chain" id="PRO_1000015815" description="Glutamyl-tRNA(Gln) amidotransferase subunit A">
    <location>
        <begin position="1"/>
        <end position="452"/>
    </location>
</feature>
<feature type="active site" description="Charge relay system" evidence="1">
    <location>
        <position position="56"/>
    </location>
</feature>
<feature type="active site" description="Charge relay system" evidence="1">
    <location>
        <position position="131"/>
    </location>
</feature>
<feature type="active site" description="Acyl-ester intermediate" evidence="1">
    <location>
        <position position="155"/>
    </location>
</feature>
<evidence type="ECO:0000255" key="1">
    <source>
        <dbReference type="HAMAP-Rule" id="MF_00120"/>
    </source>
</evidence>
<protein>
    <recommendedName>
        <fullName evidence="1">Glutamyl-tRNA(Gln) amidotransferase subunit A</fullName>
        <shortName evidence="1">Glu-ADT subunit A</shortName>
        <ecNumber evidence="1">6.3.5.7</ecNumber>
    </recommendedName>
</protein>
<gene>
    <name evidence="1" type="primary">gatA</name>
    <name type="ordered locus">Ccur92_04650</name>
    <name type="ORF">CCV52592_0978</name>
</gene>
<organism>
    <name type="scientific">Campylobacter curvus (strain 525.92)</name>
    <dbReference type="NCBI Taxonomy" id="360105"/>
    <lineage>
        <taxon>Bacteria</taxon>
        <taxon>Pseudomonadati</taxon>
        <taxon>Campylobacterota</taxon>
        <taxon>Epsilonproteobacteria</taxon>
        <taxon>Campylobacterales</taxon>
        <taxon>Campylobacteraceae</taxon>
        <taxon>Campylobacter</taxon>
    </lineage>
</organism>
<comment type="function">
    <text evidence="1">Allows the formation of correctly charged Gln-tRNA(Gln) through the transamidation of misacylated Glu-tRNA(Gln) in organisms which lack glutaminyl-tRNA synthetase. The reaction takes place in the presence of glutamine and ATP through an activated gamma-phospho-Glu-tRNA(Gln).</text>
</comment>
<comment type="catalytic activity">
    <reaction evidence="1">
        <text>L-glutamyl-tRNA(Gln) + L-glutamine + ATP + H2O = L-glutaminyl-tRNA(Gln) + L-glutamate + ADP + phosphate + H(+)</text>
        <dbReference type="Rhea" id="RHEA:17521"/>
        <dbReference type="Rhea" id="RHEA-COMP:9681"/>
        <dbReference type="Rhea" id="RHEA-COMP:9684"/>
        <dbReference type="ChEBI" id="CHEBI:15377"/>
        <dbReference type="ChEBI" id="CHEBI:15378"/>
        <dbReference type="ChEBI" id="CHEBI:29985"/>
        <dbReference type="ChEBI" id="CHEBI:30616"/>
        <dbReference type="ChEBI" id="CHEBI:43474"/>
        <dbReference type="ChEBI" id="CHEBI:58359"/>
        <dbReference type="ChEBI" id="CHEBI:78520"/>
        <dbReference type="ChEBI" id="CHEBI:78521"/>
        <dbReference type="ChEBI" id="CHEBI:456216"/>
        <dbReference type="EC" id="6.3.5.7"/>
    </reaction>
</comment>
<comment type="subunit">
    <text evidence="1">Heterotrimer of A, B and C subunits.</text>
</comment>
<comment type="similarity">
    <text evidence="1">Belongs to the amidase family. GatA subfamily.</text>
</comment>
<proteinExistence type="inferred from homology"/>